<protein>
    <recommendedName>
        <fullName evidence="1">Large ribosomal subunit protein uL13</fullName>
    </recommendedName>
    <alternativeName>
        <fullName evidence="2">50S ribosomal protein L13</fullName>
    </alternativeName>
</protein>
<reference key="1">
    <citation type="journal article" date="2008" name="Proc. Natl. Acad. Sci. U.S.A.">
        <title>Niche adaptation and genome expansion in the chlorophyll d-producing cyanobacterium Acaryochloris marina.</title>
        <authorList>
            <person name="Swingley W.D."/>
            <person name="Chen M."/>
            <person name="Cheung P.C."/>
            <person name="Conrad A.L."/>
            <person name="Dejesa L.C."/>
            <person name="Hao J."/>
            <person name="Honchak B.M."/>
            <person name="Karbach L.E."/>
            <person name="Kurdoglu A."/>
            <person name="Lahiri S."/>
            <person name="Mastrian S.D."/>
            <person name="Miyashita H."/>
            <person name="Page L."/>
            <person name="Ramakrishna P."/>
            <person name="Satoh S."/>
            <person name="Sattley W.M."/>
            <person name="Shimada Y."/>
            <person name="Taylor H.L."/>
            <person name="Tomo T."/>
            <person name="Tsuchiya T."/>
            <person name="Wang Z.T."/>
            <person name="Raymond J."/>
            <person name="Mimuro M."/>
            <person name="Blankenship R.E."/>
            <person name="Touchman J.W."/>
        </authorList>
    </citation>
    <scope>NUCLEOTIDE SEQUENCE [LARGE SCALE GENOMIC DNA]</scope>
    <source>
        <strain>MBIC 11017</strain>
    </source>
</reference>
<comment type="function">
    <text evidence="1">This protein is one of the early assembly proteins of the 50S ribosomal subunit, although it is not seen to bind rRNA by itself. It is important during the early stages of 50S assembly.</text>
</comment>
<comment type="subunit">
    <text evidence="1">Part of the 50S ribosomal subunit.</text>
</comment>
<comment type="similarity">
    <text evidence="1">Belongs to the universal ribosomal protein uL13 family.</text>
</comment>
<name>RL13_ACAM1</name>
<keyword id="KW-1185">Reference proteome</keyword>
<keyword id="KW-0687">Ribonucleoprotein</keyword>
<keyword id="KW-0689">Ribosomal protein</keyword>
<evidence type="ECO:0000255" key="1">
    <source>
        <dbReference type="HAMAP-Rule" id="MF_01366"/>
    </source>
</evidence>
<evidence type="ECO:0000305" key="2"/>
<sequence length="151" mass="16957">MEKTYLPTVSTADKKWYVVDAENQRLGRLATQIAMILRGKNKPTYTPFMNTGDFVIVINAEKVTVTGNKGEQKLYRRHSGRPGGMKTETFNHLQERIPERIIEKAVKGMLPKNALGRQLFRSLKVYAGPDHPHAAQKPEVLSIQTIPGAKS</sequence>
<accession>B0C427</accession>
<feature type="chain" id="PRO_1000087073" description="Large ribosomal subunit protein uL13">
    <location>
        <begin position="1"/>
        <end position="151"/>
    </location>
</feature>
<gene>
    <name evidence="1" type="primary">rplM</name>
    <name evidence="1" type="synonym">rpl13</name>
    <name type="ordered locus">AM1_1250</name>
</gene>
<proteinExistence type="inferred from homology"/>
<dbReference type="EMBL" id="CP000828">
    <property type="protein sequence ID" value="ABW26287.1"/>
    <property type="molecule type" value="Genomic_DNA"/>
</dbReference>
<dbReference type="RefSeq" id="WP_010480586.1">
    <property type="nucleotide sequence ID" value="NC_009925.1"/>
</dbReference>
<dbReference type="SMR" id="B0C427"/>
<dbReference type="STRING" id="329726.AM1_1250"/>
<dbReference type="KEGG" id="amr:AM1_1250"/>
<dbReference type="eggNOG" id="COG0102">
    <property type="taxonomic scope" value="Bacteria"/>
</dbReference>
<dbReference type="HOGENOM" id="CLU_082184_2_2_3"/>
<dbReference type="OrthoDB" id="9801330at2"/>
<dbReference type="Proteomes" id="UP000000268">
    <property type="component" value="Chromosome"/>
</dbReference>
<dbReference type="GO" id="GO:0022625">
    <property type="term" value="C:cytosolic large ribosomal subunit"/>
    <property type="evidence" value="ECO:0007669"/>
    <property type="project" value="TreeGrafter"/>
</dbReference>
<dbReference type="GO" id="GO:0003729">
    <property type="term" value="F:mRNA binding"/>
    <property type="evidence" value="ECO:0007669"/>
    <property type="project" value="TreeGrafter"/>
</dbReference>
<dbReference type="GO" id="GO:0003735">
    <property type="term" value="F:structural constituent of ribosome"/>
    <property type="evidence" value="ECO:0007669"/>
    <property type="project" value="InterPro"/>
</dbReference>
<dbReference type="GO" id="GO:0017148">
    <property type="term" value="P:negative regulation of translation"/>
    <property type="evidence" value="ECO:0007669"/>
    <property type="project" value="TreeGrafter"/>
</dbReference>
<dbReference type="GO" id="GO:0006412">
    <property type="term" value="P:translation"/>
    <property type="evidence" value="ECO:0007669"/>
    <property type="project" value="UniProtKB-UniRule"/>
</dbReference>
<dbReference type="CDD" id="cd00392">
    <property type="entry name" value="Ribosomal_L13"/>
    <property type="match status" value="1"/>
</dbReference>
<dbReference type="FunFam" id="3.90.1180.10:FF:000001">
    <property type="entry name" value="50S ribosomal protein L13"/>
    <property type="match status" value="1"/>
</dbReference>
<dbReference type="Gene3D" id="3.90.1180.10">
    <property type="entry name" value="Ribosomal protein L13"/>
    <property type="match status" value="1"/>
</dbReference>
<dbReference type="HAMAP" id="MF_01366">
    <property type="entry name" value="Ribosomal_uL13"/>
    <property type="match status" value="1"/>
</dbReference>
<dbReference type="InterPro" id="IPR005822">
    <property type="entry name" value="Ribosomal_uL13"/>
</dbReference>
<dbReference type="InterPro" id="IPR005823">
    <property type="entry name" value="Ribosomal_uL13_bac-type"/>
</dbReference>
<dbReference type="InterPro" id="IPR023563">
    <property type="entry name" value="Ribosomal_uL13_CS"/>
</dbReference>
<dbReference type="InterPro" id="IPR036899">
    <property type="entry name" value="Ribosomal_uL13_sf"/>
</dbReference>
<dbReference type="NCBIfam" id="TIGR01066">
    <property type="entry name" value="rplM_bact"/>
    <property type="match status" value="1"/>
</dbReference>
<dbReference type="PANTHER" id="PTHR11545:SF2">
    <property type="entry name" value="LARGE RIBOSOMAL SUBUNIT PROTEIN UL13M"/>
    <property type="match status" value="1"/>
</dbReference>
<dbReference type="PANTHER" id="PTHR11545">
    <property type="entry name" value="RIBOSOMAL PROTEIN L13"/>
    <property type="match status" value="1"/>
</dbReference>
<dbReference type="Pfam" id="PF00572">
    <property type="entry name" value="Ribosomal_L13"/>
    <property type="match status" value="1"/>
</dbReference>
<dbReference type="PIRSF" id="PIRSF002181">
    <property type="entry name" value="Ribosomal_L13"/>
    <property type="match status" value="1"/>
</dbReference>
<dbReference type="SUPFAM" id="SSF52161">
    <property type="entry name" value="Ribosomal protein L13"/>
    <property type="match status" value="1"/>
</dbReference>
<dbReference type="PROSITE" id="PS00783">
    <property type="entry name" value="RIBOSOMAL_L13"/>
    <property type="match status" value="1"/>
</dbReference>
<organism>
    <name type="scientific">Acaryochloris marina (strain MBIC 11017)</name>
    <dbReference type="NCBI Taxonomy" id="329726"/>
    <lineage>
        <taxon>Bacteria</taxon>
        <taxon>Bacillati</taxon>
        <taxon>Cyanobacteriota</taxon>
        <taxon>Cyanophyceae</taxon>
        <taxon>Acaryochloridales</taxon>
        <taxon>Acaryochloridaceae</taxon>
        <taxon>Acaryochloris</taxon>
    </lineage>
</organism>